<gene>
    <name evidence="1" type="primary">rpoZ</name>
    <name type="ordered locus">RAF_ORF0799</name>
</gene>
<accession>C3PP13</accession>
<sequence>MARITAEDCNKIIPDRFRLVVLATRYAKLLNYKVETNQIKKEKRDKPPVIALRRIAAGKVSVAQLEQDLINSLRTRTMIEPLVNQDESEAVEEKFEYLPEVYIGEDYSDLDDQIFIDENGEDYETDK</sequence>
<reference key="1">
    <citation type="journal article" date="2009" name="BMC Genomics">
        <title>Analysis of the Rickettsia africae genome reveals that virulence acquisition in Rickettsia species may be explained by genome reduction.</title>
        <authorList>
            <person name="Fournier P.-E."/>
            <person name="El Karkouri K."/>
            <person name="Leroy Q."/>
            <person name="Robert C."/>
            <person name="Giumelli B."/>
            <person name="Renesto P."/>
            <person name="Socolovschi C."/>
            <person name="Parola P."/>
            <person name="Audic S."/>
            <person name="Raoult D."/>
        </authorList>
    </citation>
    <scope>NUCLEOTIDE SEQUENCE [LARGE SCALE GENOMIC DNA]</scope>
    <source>
        <strain>ESF-5</strain>
    </source>
</reference>
<proteinExistence type="inferred from homology"/>
<name>RPOZ_RICAE</name>
<comment type="function">
    <text evidence="1">Promotes RNA polymerase assembly. Latches the N- and C-terminal regions of the beta' subunit thereby facilitating its interaction with the beta and alpha subunits.</text>
</comment>
<comment type="catalytic activity">
    <reaction evidence="1">
        <text>RNA(n) + a ribonucleoside 5'-triphosphate = RNA(n+1) + diphosphate</text>
        <dbReference type="Rhea" id="RHEA:21248"/>
        <dbReference type="Rhea" id="RHEA-COMP:14527"/>
        <dbReference type="Rhea" id="RHEA-COMP:17342"/>
        <dbReference type="ChEBI" id="CHEBI:33019"/>
        <dbReference type="ChEBI" id="CHEBI:61557"/>
        <dbReference type="ChEBI" id="CHEBI:140395"/>
        <dbReference type="EC" id="2.7.7.6"/>
    </reaction>
</comment>
<comment type="subunit">
    <text evidence="1">The RNAP catalytic core consists of 2 alpha, 1 beta, 1 beta' and 1 omega subunit. When a sigma factor is associated with the core the holoenzyme is formed, which can initiate transcription.</text>
</comment>
<comment type="similarity">
    <text evidence="1">Belongs to the RNA polymerase subunit omega family.</text>
</comment>
<evidence type="ECO:0000255" key="1">
    <source>
        <dbReference type="HAMAP-Rule" id="MF_00366"/>
    </source>
</evidence>
<feature type="chain" id="PRO_1000205528" description="DNA-directed RNA polymerase subunit omega">
    <location>
        <begin position="1"/>
        <end position="127"/>
    </location>
</feature>
<protein>
    <recommendedName>
        <fullName evidence="1">DNA-directed RNA polymerase subunit omega</fullName>
        <shortName evidence="1">RNAP omega subunit</shortName>
        <ecNumber evidence="1">2.7.7.6</ecNumber>
    </recommendedName>
    <alternativeName>
        <fullName evidence="1">RNA polymerase omega subunit</fullName>
    </alternativeName>
    <alternativeName>
        <fullName evidence="1">Transcriptase subunit omega</fullName>
    </alternativeName>
</protein>
<organism>
    <name type="scientific">Rickettsia africae (strain ESF-5)</name>
    <dbReference type="NCBI Taxonomy" id="347255"/>
    <lineage>
        <taxon>Bacteria</taxon>
        <taxon>Pseudomonadati</taxon>
        <taxon>Pseudomonadota</taxon>
        <taxon>Alphaproteobacteria</taxon>
        <taxon>Rickettsiales</taxon>
        <taxon>Rickettsiaceae</taxon>
        <taxon>Rickettsieae</taxon>
        <taxon>Rickettsia</taxon>
        <taxon>spotted fever group</taxon>
    </lineage>
</organism>
<dbReference type="EC" id="2.7.7.6" evidence="1"/>
<dbReference type="EMBL" id="CP001612">
    <property type="protein sequence ID" value="ACP53673.1"/>
    <property type="molecule type" value="Genomic_DNA"/>
</dbReference>
<dbReference type="RefSeq" id="WP_010977486.1">
    <property type="nucleotide sequence ID" value="NC_012633.1"/>
</dbReference>
<dbReference type="SMR" id="C3PP13"/>
<dbReference type="GeneID" id="927855"/>
<dbReference type="KEGG" id="raf:RAF_ORF0799"/>
<dbReference type="HOGENOM" id="CLU_138545_0_0_5"/>
<dbReference type="Proteomes" id="UP000002305">
    <property type="component" value="Chromosome"/>
</dbReference>
<dbReference type="GO" id="GO:0000428">
    <property type="term" value="C:DNA-directed RNA polymerase complex"/>
    <property type="evidence" value="ECO:0007669"/>
    <property type="project" value="UniProtKB-KW"/>
</dbReference>
<dbReference type="GO" id="GO:0003677">
    <property type="term" value="F:DNA binding"/>
    <property type="evidence" value="ECO:0007669"/>
    <property type="project" value="UniProtKB-UniRule"/>
</dbReference>
<dbReference type="GO" id="GO:0003899">
    <property type="term" value="F:DNA-directed RNA polymerase activity"/>
    <property type="evidence" value="ECO:0007669"/>
    <property type="project" value="UniProtKB-UniRule"/>
</dbReference>
<dbReference type="GO" id="GO:0006351">
    <property type="term" value="P:DNA-templated transcription"/>
    <property type="evidence" value="ECO:0007669"/>
    <property type="project" value="UniProtKB-UniRule"/>
</dbReference>
<dbReference type="Gene3D" id="3.90.940.10">
    <property type="match status" value="1"/>
</dbReference>
<dbReference type="HAMAP" id="MF_00366">
    <property type="entry name" value="RNApol_bact_RpoZ"/>
    <property type="match status" value="1"/>
</dbReference>
<dbReference type="InterPro" id="IPR003716">
    <property type="entry name" value="DNA-dir_RNA_pol_omega"/>
</dbReference>
<dbReference type="InterPro" id="IPR006110">
    <property type="entry name" value="Pol_omega/Rpo6/RPB6"/>
</dbReference>
<dbReference type="InterPro" id="IPR036161">
    <property type="entry name" value="RPB6/omega-like_sf"/>
</dbReference>
<dbReference type="NCBIfam" id="TIGR00690">
    <property type="entry name" value="rpoZ"/>
    <property type="match status" value="1"/>
</dbReference>
<dbReference type="PANTHER" id="PTHR34476">
    <property type="entry name" value="DNA-DIRECTED RNA POLYMERASE SUBUNIT OMEGA"/>
    <property type="match status" value="1"/>
</dbReference>
<dbReference type="PANTHER" id="PTHR34476:SF1">
    <property type="entry name" value="DNA-DIRECTED RNA POLYMERASE SUBUNIT OMEGA"/>
    <property type="match status" value="1"/>
</dbReference>
<dbReference type="Pfam" id="PF01192">
    <property type="entry name" value="RNA_pol_Rpb6"/>
    <property type="match status" value="1"/>
</dbReference>
<dbReference type="SMART" id="SM01409">
    <property type="entry name" value="RNA_pol_Rpb6"/>
    <property type="match status" value="1"/>
</dbReference>
<dbReference type="SUPFAM" id="SSF63562">
    <property type="entry name" value="RPB6/omega subunit-like"/>
    <property type="match status" value="1"/>
</dbReference>
<keyword id="KW-0240">DNA-directed RNA polymerase</keyword>
<keyword id="KW-0548">Nucleotidyltransferase</keyword>
<keyword id="KW-0804">Transcription</keyword>
<keyword id="KW-0808">Transferase</keyword>